<proteinExistence type="inferred from homology"/>
<feature type="chain" id="PRO_1000199432" description="Proline--tRNA ligase">
    <location>
        <begin position="1"/>
        <end position="601"/>
    </location>
</feature>
<name>SYP_PICP2</name>
<comment type="function">
    <text evidence="1">Catalyzes the attachment of proline to tRNA(Pro) in a two-step reaction: proline is first activated by ATP to form Pro-AMP and then transferred to the acceptor end of tRNA(Pro). As ProRS can inadvertently accommodate and process non-cognate amino acids such as alanine and cysteine, to avoid such errors it has two additional distinct editing activities against alanine. One activity is designated as 'pretransfer' editing and involves the tRNA(Pro)-independent hydrolysis of activated Ala-AMP. The other activity is designated 'posttransfer' editing and involves deacylation of mischarged Ala-tRNA(Pro). The misacylated Cys-tRNA(Pro) is not edited by ProRS.</text>
</comment>
<comment type="catalytic activity">
    <reaction evidence="1">
        <text>tRNA(Pro) + L-proline + ATP = L-prolyl-tRNA(Pro) + AMP + diphosphate</text>
        <dbReference type="Rhea" id="RHEA:14305"/>
        <dbReference type="Rhea" id="RHEA-COMP:9700"/>
        <dbReference type="Rhea" id="RHEA-COMP:9702"/>
        <dbReference type="ChEBI" id="CHEBI:30616"/>
        <dbReference type="ChEBI" id="CHEBI:33019"/>
        <dbReference type="ChEBI" id="CHEBI:60039"/>
        <dbReference type="ChEBI" id="CHEBI:78442"/>
        <dbReference type="ChEBI" id="CHEBI:78532"/>
        <dbReference type="ChEBI" id="CHEBI:456215"/>
        <dbReference type="EC" id="6.1.1.15"/>
    </reaction>
</comment>
<comment type="subunit">
    <text evidence="1">Homodimer.</text>
</comment>
<comment type="subcellular location">
    <subcellularLocation>
        <location evidence="1">Cytoplasm</location>
    </subcellularLocation>
</comment>
<comment type="domain">
    <text evidence="1">Consists of three domains: the N-terminal catalytic domain, the editing domain and the C-terminal anticodon-binding domain.</text>
</comment>
<comment type="similarity">
    <text evidence="1">Belongs to the class-II aminoacyl-tRNA synthetase family. ProS type 1 subfamily.</text>
</comment>
<sequence length="601" mass="66717">MRLSQSLFVTLREDPADAEIPSHKLLLRAGYIRRIGRGIYAYLPLMWRVLQKVSQIVREEMNATGAQETLLPQLQPAEIWQESGRWDTYTQAEGIMFSLRDRLDGELGLGPTHEEVITTIAKDMIRSYRQLPQHLYQIQTKFRDEIRPRFGLMRGREFIMKDGYSFHASEECLKKTYADMDQAYRNMLRRCGLQFRAVEADSGAIGGSGSQEFMILADAGEDEILYTEDEKYAANTEKAVSLPVEAIASPFNSFEKRETPNTATIESLCKFLNCSPTCVVKNVLYQVVYNNGKTVLALISIRGDQDVNEVKLQNELTKLAPNYDAKTVISLTVPDADAQQKWAAKSLPLGYISPALADDCIAKNKAVSGEFLRLVDPTAATLENFVTGADETNYHVLGANWGTEFKLPPLQVDVRLAKAGDRAVHDPTQILQTARGIEAGHIFQLGTKYSEAMGATFTDENGKEHPLVMGCYGVGVSRLAQAAVEQSYDENGIIWPVAIAPYHAVVVVPNVKSEEQMAAAEKLYADLNAAGVETILDDRNERAGVKFKDAELIGIPFRVVTGKSLKDGKVEVVRRKEGDRQDLDLDAVVATLKNWVEAAGQ</sequence>
<dbReference type="EC" id="6.1.1.15" evidence="1"/>
<dbReference type="EMBL" id="CP000951">
    <property type="protein sequence ID" value="ACA99646.1"/>
    <property type="molecule type" value="Genomic_DNA"/>
</dbReference>
<dbReference type="RefSeq" id="WP_012307269.1">
    <property type="nucleotide sequence ID" value="NZ_JAHHPU010000002.1"/>
</dbReference>
<dbReference type="SMR" id="B1XP53"/>
<dbReference type="STRING" id="32049.SYNPCC7002_A1656"/>
<dbReference type="KEGG" id="syp:SYNPCC7002_A1656"/>
<dbReference type="eggNOG" id="COG0442">
    <property type="taxonomic scope" value="Bacteria"/>
</dbReference>
<dbReference type="HOGENOM" id="CLU_016739_0_0_3"/>
<dbReference type="Proteomes" id="UP000001688">
    <property type="component" value="Chromosome"/>
</dbReference>
<dbReference type="GO" id="GO:0005829">
    <property type="term" value="C:cytosol"/>
    <property type="evidence" value="ECO:0007669"/>
    <property type="project" value="TreeGrafter"/>
</dbReference>
<dbReference type="GO" id="GO:0002161">
    <property type="term" value="F:aminoacyl-tRNA deacylase activity"/>
    <property type="evidence" value="ECO:0007669"/>
    <property type="project" value="InterPro"/>
</dbReference>
<dbReference type="GO" id="GO:0005524">
    <property type="term" value="F:ATP binding"/>
    <property type="evidence" value="ECO:0007669"/>
    <property type="project" value="UniProtKB-UniRule"/>
</dbReference>
<dbReference type="GO" id="GO:0004827">
    <property type="term" value="F:proline-tRNA ligase activity"/>
    <property type="evidence" value="ECO:0007669"/>
    <property type="project" value="UniProtKB-UniRule"/>
</dbReference>
<dbReference type="GO" id="GO:0006433">
    <property type="term" value="P:prolyl-tRNA aminoacylation"/>
    <property type="evidence" value="ECO:0007669"/>
    <property type="project" value="UniProtKB-UniRule"/>
</dbReference>
<dbReference type="CDD" id="cd04334">
    <property type="entry name" value="ProRS-INS"/>
    <property type="match status" value="1"/>
</dbReference>
<dbReference type="CDD" id="cd00861">
    <property type="entry name" value="ProRS_anticodon_short"/>
    <property type="match status" value="1"/>
</dbReference>
<dbReference type="CDD" id="cd00779">
    <property type="entry name" value="ProRS_core_prok"/>
    <property type="match status" value="1"/>
</dbReference>
<dbReference type="FunFam" id="3.40.50.800:FF:000011">
    <property type="entry name" value="Proline--tRNA ligase"/>
    <property type="match status" value="1"/>
</dbReference>
<dbReference type="Gene3D" id="3.40.50.800">
    <property type="entry name" value="Anticodon-binding domain"/>
    <property type="match status" value="1"/>
</dbReference>
<dbReference type="Gene3D" id="3.30.930.10">
    <property type="entry name" value="Bira Bifunctional Protein, Domain 2"/>
    <property type="match status" value="2"/>
</dbReference>
<dbReference type="HAMAP" id="MF_01569">
    <property type="entry name" value="Pro_tRNA_synth_type1"/>
    <property type="match status" value="1"/>
</dbReference>
<dbReference type="InterPro" id="IPR002314">
    <property type="entry name" value="aa-tRNA-synt_IIb"/>
</dbReference>
<dbReference type="InterPro" id="IPR006195">
    <property type="entry name" value="aa-tRNA-synth_II"/>
</dbReference>
<dbReference type="InterPro" id="IPR045864">
    <property type="entry name" value="aa-tRNA-synth_II/BPL/LPL"/>
</dbReference>
<dbReference type="InterPro" id="IPR004154">
    <property type="entry name" value="Anticodon-bd"/>
</dbReference>
<dbReference type="InterPro" id="IPR036621">
    <property type="entry name" value="Anticodon-bd_dom_sf"/>
</dbReference>
<dbReference type="InterPro" id="IPR002316">
    <property type="entry name" value="Pro-tRNA-ligase_IIa"/>
</dbReference>
<dbReference type="InterPro" id="IPR004500">
    <property type="entry name" value="Pro-tRNA-synth_IIa_bac-type"/>
</dbReference>
<dbReference type="InterPro" id="IPR023717">
    <property type="entry name" value="Pro-tRNA-Synthase_IIa_type1"/>
</dbReference>
<dbReference type="InterPro" id="IPR050062">
    <property type="entry name" value="Pro-tRNA_synthetase"/>
</dbReference>
<dbReference type="InterPro" id="IPR044140">
    <property type="entry name" value="ProRS_anticodon_short"/>
</dbReference>
<dbReference type="InterPro" id="IPR033730">
    <property type="entry name" value="ProRS_core_prok"/>
</dbReference>
<dbReference type="InterPro" id="IPR036754">
    <property type="entry name" value="YbaK/aa-tRNA-synt-asso_dom_sf"/>
</dbReference>
<dbReference type="InterPro" id="IPR007214">
    <property type="entry name" value="YbaK/aa-tRNA-synth-assoc-dom"/>
</dbReference>
<dbReference type="NCBIfam" id="NF006625">
    <property type="entry name" value="PRK09194.1"/>
    <property type="match status" value="1"/>
</dbReference>
<dbReference type="NCBIfam" id="TIGR00409">
    <property type="entry name" value="proS_fam_II"/>
    <property type="match status" value="1"/>
</dbReference>
<dbReference type="PANTHER" id="PTHR42753">
    <property type="entry name" value="MITOCHONDRIAL RIBOSOME PROTEIN L39/PROLYL-TRNA LIGASE FAMILY MEMBER"/>
    <property type="match status" value="1"/>
</dbReference>
<dbReference type="PANTHER" id="PTHR42753:SF2">
    <property type="entry name" value="PROLINE--TRNA LIGASE"/>
    <property type="match status" value="1"/>
</dbReference>
<dbReference type="Pfam" id="PF03129">
    <property type="entry name" value="HGTP_anticodon"/>
    <property type="match status" value="1"/>
</dbReference>
<dbReference type="Pfam" id="PF00587">
    <property type="entry name" value="tRNA-synt_2b"/>
    <property type="match status" value="1"/>
</dbReference>
<dbReference type="Pfam" id="PF04073">
    <property type="entry name" value="tRNA_edit"/>
    <property type="match status" value="1"/>
</dbReference>
<dbReference type="PRINTS" id="PR01046">
    <property type="entry name" value="TRNASYNTHPRO"/>
</dbReference>
<dbReference type="SUPFAM" id="SSF52954">
    <property type="entry name" value="Class II aaRS ABD-related"/>
    <property type="match status" value="1"/>
</dbReference>
<dbReference type="SUPFAM" id="SSF55681">
    <property type="entry name" value="Class II aaRS and biotin synthetases"/>
    <property type="match status" value="1"/>
</dbReference>
<dbReference type="SUPFAM" id="SSF55826">
    <property type="entry name" value="YbaK/ProRS associated domain"/>
    <property type="match status" value="1"/>
</dbReference>
<dbReference type="PROSITE" id="PS50862">
    <property type="entry name" value="AA_TRNA_LIGASE_II"/>
    <property type="match status" value="1"/>
</dbReference>
<reference key="1">
    <citation type="submission" date="2008-02" db="EMBL/GenBank/DDBJ databases">
        <title>Complete sequence of Synechococcus sp. PCC 7002.</title>
        <authorList>
            <person name="Li T."/>
            <person name="Zhao J."/>
            <person name="Zhao C."/>
            <person name="Liu Z."/>
            <person name="Zhao F."/>
            <person name="Marquardt J."/>
            <person name="Nomura C.T."/>
            <person name="Persson S."/>
            <person name="Detter J.C."/>
            <person name="Richardson P.M."/>
            <person name="Lanz C."/>
            <person name="Schuster S.C."/>
            <person name="Wang J."/>
            <person name="Li S."/>
            <person name="Huang X."/>
            <person name="Cai T."/>
            <person name="Yu Z."/>
            <person name="Luo J."/>
            <person name="Zhao J."/>
            <person name="Bryant D.A."/>
        </authorList>
    </citation>
    <scope>NUCLEOTIDE SEQUENCE [LARGE SCALE GENOMIC DNA]</scope>
    <source>
        <strain>ATCC 27264 / PCC 7002 / PR-6</strain>
    </source>
</reference>
<protein>
    <recommendedName>
        <fullName evidence="1">Proline--tRNA ligase</fullName>
        <ecNumber evidence="1">6.1.1.15</ecNumber>
    </recommendedName>
    <alternativeName>
        <fullName evidence="1">Prolyl-tRNA synthetase</fullName>
        <shortName evidence="1">ProRS</shortName>
    </alternativeName>
</protein>
<gene>
    <name evidence="1" type="primary">proS</name>
    <name type="ordered locus">SYNPCC7002_A1656</name>
</gene>
<accession>B1XP53</accession>
<evidence type="ECO:0000255" key="1">
    <source>
        <dbReference type="HAMAP-Rule" id="MF_01569"/>
    </source>
</evidence>
<organism>
    <name type="scientific">Picosynechococcus sp. (strain ATCC 27264 / PCC 7002 / PR-6)</name>
    <name type="common">Agmenellum quadruplicatum</name>
    <dbReference type="NCBI Taxonomy" id="32049"/>
    <lineage>
        <taxon>Bacteria</taxon>
        <taxon>Bacillati</taxon>
        <taxon>Cyanobacteriota</taxon>
        <taxon>Cyanophyceae</taxon>
        <taxon>Oscillatoriophycideae</taxon>
        <taxon>Chroococcales</taxon>
        <taxon>Geminocystaceae</taxon>
        <taxon>Picosynechococcus</taxon>
    </lineage>
</organism>
<keyword id="KW-0030">Aminoacyl-tRNA synthetase</keyword>
<keyword id="KW-0067">ATP-binding</keyword>
<keyword id="KW-0963">Cytoplasm</keyword>
<keyword id="KW-0436">Ligase</keyword>
<keyword id="KW-0547">Nucleotide-binding</keyword>
<keyword id="KW-0648">Protein biosynthesis</keyword>
<keyword id="KW-1185">Reference proteome</keyword>